<accession>B1IBD6</accession>
<comment type="function">
    <text evidence="1">Required for rescue of stalled ribosomes mediated by trans-translation. Binds to transfer-messenger RNA (tmRNA), required for stable association of tmRNA with ribosomes. tmRNA and SmpB together mimic tRNA shape, replacing the anticodon stem-loop with SmpB. tmRNA is encoded by the ssrA gene; the 2 termini fold to resemble tRNA(Ala) and it encodes a 'tag peptide', a short internal open reading frame. During trans-translation Ala-aminoacylated tmRNA acts like a tRNA, entering the A-site of stalled ribosomes, displacing the stalled mRNA. The ribosome then switches to translate the ORF on the tmRNA; the nascent peptide is terminated with the 'tag peptide' encoded by the tmRNA and targeted for degradation. The ribosome is freed to recommence translation, which seems to be the essential function of trans-translation.</text>
</comment>
<comment type="subcellular location">
    <subcellularLocation>
        <location evidence="1">Cytoplasm</location>
    </subcellularLocation>
    <text evidence="1">The tmRNA-SmpB complex associates with stalled 70S ribosomes.</text>
</comment>
<comment type="similarity">
    <text evidence="1">Belongs to the SmpB family.</text>
</comment>
<evidence type="ECO:0000255" key="1">
    <source>
        <dbReference type="HAMAP-Rule" id="MF_00023"/>
    </source>
</evidence>
<organism>
    <name type="scientific">Streptococcus pneumoniae (strain Hungary19A-6)</name>
    <dbReference type="NCBI Taxonomy" id="487214"/>
    <lineage>
        <taxon>Bacteria</taxon>
        <taxon>Bacillati</taxon>
        <taxon>Bacillota</taxon>
        <taxon>Bacilli</taxon>
        <taxon>Lactobacillales</taxon>
        <taxon>Streptococcaceae</taxon>
        <taxon>Streptococcus</taxon>
    </lineage>
</organism>
<gene>
    <name evidence="1" type="primary">smpB</name>
    <name type="ordered locus">SPH_1077</name>
</gene>
<dbReference type="EMBL" id="CP000936">
    <property type="protein sequence ID" value="ACA36921.1"/>
    <property type="molecule type" value="Genomic_DNA"/>
</dbReference>
<dbReference type="RefSeq" id="WP_001051750.1">
    <property type="nucleotide sequence ID" value="NC_010380.1"/>
</dbReference>
<dbReference type="SMR" id="B1IBD6"/>
<dbReference type="GeneID" id="93739761"/>
<dbReference type="KEGG" id="spv:SPH_1077"/>
<dbReference type="HOGENOM" id="CLU_108953_0_0_9"/>
<dbReference type="Proteomes" id="UP000002163">
    <property type="component" value="Chromosome"/>
</dbReference>
<dbReference type="GO" id="GO:0005829">
    <property type="term" value="C:cytosol"/>
    <property type="evidence" value="ECO:0007669"/>
    <property type="project" value="TreeGrafter"/>
</dbReference>
<dbReference type="GO" id="GO:0003723">
    <property type="term" value="F:RNA binding"/>
    <property type="evidence" value="ECO:0007669"/>
    <property type="project" value="UniProtKB-UniRule"/>
</dbReference>
<dbReference type="GO" id="GO:0070929">
    <property type="term" value="P:trans-translation"/>
    <property type="evidence" value="ECO:0007669"/>
    <property type="project" value="UniProtKB-UniRule"/>
</dbReference>
<dbReference type="CDD" id="cd09294">
    <property type="entry name" value="SmpB"/>
    <property type="match status" value="1"/>
</dbReference>
<dbReference type="Gene3D" id="2.40.280.10">
    <property type="match status" value="1"/>
</dbReference>
<dbReference type="HAMAP" id="MF_00023">
    <property type="entry name" value="SmpB"/>
    <property type="match status" value="1"/>
</dbReference>
<dbReference type="InterPro" id="IPR023620">
    <property type="entry name" value="SmpB"/>
</dbReference>
<dbReference type="InterPro" id="IPR000037">
    <property type="entry name" value="SsrA-bd_prot"/>
</dbReference>
<dbReference type="InterPro" id="IPR020081">
    <property type="entry name" value="SsrA-bd_prot_CS"/>
</dbReference>
<dbReference type="NCBIfam" id="NF003843">
    <property type="entry name" value="PRK05422.1"/>
    <property type="match status" value="1"/>
</dbReference>
<dbReference type="NCBIfam" id="TIGR00086">
    <property type="entry name" value="smpB"/>
    <property type="match status" value="1"/>
</dbReference>
<dbReference type="PANTHER" id="PTHR30308:SF2">
    <property type="entry name" value="SSRA-BINDING PROTEIN"/>
    <property type="match status" value="1"/>
</dbReference>
<dbReference type="PANTHER" id="PTHR30308">
    <property type="entry name" value="TMRNA-BINDING COMPONENT OF TRANS-TRANSLATION TAGGING COMPLEX"/>
    <property type="match status" value="1"/>
</dbReference>
<dbReference type="Pfam" id="PF01668">
    <property type="entry name" value="SmpB"/>
    <property type="match status" value="1"/>
</dbReference>
<dbReference type="SUPFAM" id="SSF74982">
    <property type="entry name" value="Small protein B (SmpB)"/>
    <property type="match status" value="1"/>
</dbReference>
<dbReference type="PROSITE" id="PS01317">
    <property type="entry name" value="SSRP"/>
    <property type="match status" value="1"/>
</dbReference>
<reference key="1">
    <citation type="journal article" date="2010" name="Genome Biol.">
        <title>Structure and dynamics of the pan-genome of Streptococcus pneumoniae and closely related species.</title>
        <authorList>
            <person name="Donati C."/>
            <person name="Hiller N.L."/>
            <person name="Tettelin H."/>
            <person name="Muzzi A."/>
            <person name="Croucher N.J."/>
            <person name="Angiuoli S.V."/>
            <person name="Oggioni M."/>
            <person name="Dunning Hotopp J.C."/>
            <person name="Hu F.Z."/>
            <person name="Riley D.R."/>
            <person name="Covacci A."/>
            <person name="Mitchell T.J."/>
            <person name="Bentley S.D."/>
            <person name="Kilian M."/>
            <person name="Ehrlich G.D."/>
            <person name="Rappuoli R."/>
            <person name="Moxon E.R."/>
            <person name="Masignani V."/>
        </authorList>
    </citation>
    <scope>NUCLEOTIDE SEQUENCE [LARGE SCALE GENOMIC DNA]</scope>
    <source>
        <strain>Hungary19A-6</strain>
    </source>
</reference>
<proteinExistence type="inferred from homology"/>
<keyword id="KW-0963">Cytoplasm</keyword>
<keyword id="KW-0694">RNA-binding</keyword>
<feature type="chain" id="PRO_1000090192" description="SsrA-binding protein">
    <location>
        <begin position="1"/>
        <end position="155"/>
    </location>
</feature>
<name>SSRP_STRPI</name>
<protein>
    <recommendedName>
        <fullName evidence="1">SsrA-binding protein</fullName>
    </recommendedName>
    <alternativeName>
        <fullName evidence="1">Small protein B</fullName>
    </alternativeName>
</protein>
<sequence length="155" mass="17748">MAKGEGKVVAQNKKARHDYTIVDTLEAGMVLTGTEIKSVRAARINLKDGFAQVKNGEVWLSNVHIAPYEEGNIWNQEPERRRKLLLHKKQIQKLEQETKGTGMTLVPLKVYIKDGYAKLLLGLAKGKHDYDKRESIKRREQNRDIARVMKAVNQR</sequence>